<sequence>MNTLQLINKNHPLKKNQEPPHLVLAPFSDHDVYLQPEVAKQWERLVRATGLEKDIRLVDGYRTEKEQRRLWEYSLKENGLAYTKQFVALPGCSEHQIGLAIDVGLKKQEDDDLICPHFRDSAAADLFMQQMMNYGFILRYPEDKQEITGISYEPWHFRYVGLPHSQVITAQKWTLEEYHDYLAQTVRQFA</sequence>
<keyword id="KW-0002">3D-structure</keyword>
<keyword id="KW-0046">Antibiotic resistance</keyword>
<keyword id="KW-0121">Carboxypeptidase</keyword>
<keyword id="KW-0963">Cytoplasm</keyword>
<keyword id="KW-1015">Disulfide bond</keyword>
<keyword id="KW-0378">Hydrolase</keyword>
<keyword id="KW-0479">Metal-binding</keyword>
<keyword id="KW-0511">Multifunctional enzyme</keyword>
<keyword id="KW-0645">Protease</keyword>
<keyword id="KW-1185">Reference proteome</keyword>
<keyword id="KW-0862">Zinc</keyword>
<comment type="function">
    <text evidence="1 2 3 4">Bifunctional enzyme, exhibiting dipeptidase and carboxypeptidase activities (PubMed:10564477, PubMed:10817725, PubMed:24711382). Catalyzes hydrolysis of the D-alanyl-D-alanine dipeptide (PubMed:10564477, PubMed:10817725, PubMed:24711382). Cleaves the C-terminal D-alanine residue of UDP-muramyl-pentapeptide[Ala] (UDP-MurNAc-L-Ala-D-Glu-L-Lys-D-Ala-D-Ala) (PubMed:10564477, PubMed:10817725, PubMed:24711382). Shows no activity against the pentapeptide with a C-terminal D-serine residue (PubMed:10564477). Together with VanC/VanC1 and VanT, required for vancomycin resistance in E.gallinarum strain BM4174 (PubMed:10817725, PubMed:15728903).</text>
</comment>
<comment type="catalytic activity">
    <reaction evidence="1 2 4">
        <text>D-alanyl-D-alanine + H2O = 2 D-alanine</text>
        <dbReference type="Rhea" id="RHEA:20661"/>
        <dbReference type="ChEBI" id="CHEBI:15377"/>
        <dbReference type="ChEBI" id="CHEBI:57416"/>
        <dbReference type="ChEBI" id="CHEBI:57822"/>
        <dbReference type="EC" id="3.4.13.22"/>
    </reaction>
</comment>
<comment type="catalytic activity">
    <reaction evidence="1 2 4">
        <text>UDP-N-acetyl-alpha-D-muramoyl-L-alanyl-gamma-D-glutamyl-L-lysyl-D-alanyl-D-alanine + H2O = UDP-N-acetyl-alpha-D-muramoyl-L-alanyl-gamma-D-glutamyl-L-lysyl-D-alanine + D-alanine</text>
        <dbReference type="Rhea" id="RHEA:83151"/>
        <dbReference type="ChEBI" id="CHEBI:15377"/>
        <dbReference type="ChEBI" id="CHEBI:57416"/>
        <dbReference type="ChEBI" id="CHEBI:70758"/>
        <dbReference type="ChEBI" id="CHEBI:232760"/>
    </reaction>
</comment>
<comment type="biophysicochemical properties">
    <kinetics>
        <KM evidence="4">0.49 mM for D-Ala-D-Ala as substrate (at pH 7.5 and 37 degrees Celsius)</KM>
        <KM evidence="4">1.39 mM for UDP-MurNAc-L-Ala-D-Glu-L-Lys-D-Ala-D-Ala as substrate (at pH 7.5 and 37 degrees Celsius)</KM>
        <text evidence="4">kcat is 131.7 min(-1) with D-Ala-D-Ala as substrate (at pH 7.5 and 37 degrees Celsius) (PubMed:24711382). kcat is 27.7 min(-1) with UDP-MurNAc-L-Ala-D-Glu-L-Lys-D-Ala-D-Ala as substrate (at pH 7.5 and 37 degrees Celsius) (PubMed:24711382).</text>
    </kinetics>
</comment>
<comment type="subunit">
    <text evidence="4">Homodimer.</text>
</comment>
<comment type="subcellular location">
    <subcellularLocation>
        <location evidence="1">Cytoplasm</location>
    </subcellularLocation>
</comment>
<comment type="induction">
    <text evidence="2 3">Expression regulated by upstream promoter elements (PubMed:15728903). Part of the probable VanC-type operon associated with vancomycin resistance (PubMed:10817725, PubMed:15728903).</text>
</comment>
<comment type="similarity">
    <text evidence="6">Belongs to the peptidase M15D family.</text>
</comment>
<reference evidence="7" key="1">
    <citation type="journal article" date="1992" name="Gene">
        <title>Sequence of the vanC gene of Enterococcus gallinarum BM4174 encoding a D-alanine:D-alanine ligase-related protein necessary for vancomycin resistance.</title>
        <authorList>
            <person name="Dutka-Malen S."/>
            <person name="Molinas C."/>
            <person name="Arthur M."/>
            <person name="Courvalin P."/>
        </authorList>
    </citation>
    <scope>NUCLEOTIDE SEQUENCE [GENOMIC DNA]</scope>
    <source>
        <strain evidence="7">BM4174</strain>
    </source>
</reference>
<reference evidence="7" key="2">
    <citation type="submission" date="1993-04" db="EMBL/GenBank/DDBJ databases">
        <authorList>
            <person name="Castiglia D."/>
            <person name="Cestelli A."/>
            <person name="Scaturro M."/>
            <person name="Di Liegro I."/>
        </authorList>
    </citation>
    <scope>NUCLEOTIDE SEQUENCE [GENOMIC DNA]</scope>
    <source>
        <strain evidence="7">BM4174</strain>
    </source>
</reference>
<reference evidence="7" key="3">
    <citation type="journal article" date="1999" name="Mol. Microbiol.">
        <title>Characterization and modelling of VanT: a novel, membrane-bound, serine racemase from vancomycin-resistant Enterococcus gallinarum BM4174.</title>
        <authorList>
            <person name="Arias C.A."/>
            <person name="Martin-Martinez M."/>
            <person name="Blundell T.L."/>
            <person name="Arthur M."/>
            <person name="Courvalin P."/>
            <person name="Reynolds P.E."/>
        </authorList>
    </citation>
    <scope>NUCLEOTIDE SEQUENCE [GENOMIC DNA]</scope>
    <source>
        <strain evidence="7">BM4174</strain>
    </source>
</reference>
<reference evidence="7" key="4">
    <citation type="journal article" date="1999" name="Mol. Microbiol.">
        <title>Gene vanXYC encodes D,D -dipeptidase (VanX) and D,D-carboxypeptidase (VanY) activities in vancomycin-resistant Enterococcus gallinarum BM4174.</title>
        <authorList>
            <person name="Reynolds P.E."/>
            <person name="Arias C.A."/>
            <person name="Courvalin P."/>
        </authorList>
    </citation>
    <scope>NUCLEOTIDE SEQUENCE [GENOMIC DNA]</scope>
    <scope>FUNCTION</scope>
    <scope>CATALYTIC ACTIVITY</scope>
    <scope>SUBCELLULAR LOCATION</scope>
    <source>
        <strain evidence="7">BM4174</strain>
    </source>
</reference>
<reference evidence="7" key="5">
    <citation type="journal article" date="2000" name="Antimicrob. Agents Chemother.">
        <title>vanC cluster of vancomycin-resistant Enterococcus gallinarum BM4174.</title>
        <authorList>
            <person name="Arias C.A."/>
            <person name="Courvalin P."/>
            <person name="Reynolds P.E."/>
        </authorList>
    </citation>
    <scope>NUCLEOTIDE SEQUENCE [GENOMIC DNA]</scope>
    <scope>FUNCTION</scope>
    <scope>CATALYTIC ACTIVITY</scope>
    <scope>INDUCTION</scope>
    <source>
        <strain evidence="7">BM4174</strain>
    </source>
</reference>
<reference evidence="8" key="6">
    <citation type="journal article" date="2006" name="Antimicrob. Agents Chemother.">
        <title>Enterococcus gallinarum N04-0414 harbors a VanD-type vancomycin resistance operon and does not contain a D-alanine:D-alanine 2 (ddl2) gene.</title>
        <authorList>
            <person name="Boyd D.A."/>
            <person name="Miller M.A."/>
            <person name="Mulvey M.R."/>
        </authorList>
    </citation>
    <scope>NUCLEOTIDE SEQUENCE [GENOMIC DNA]</scope>
    <source>
        <strain evidence="8">N04-0414</strain>
    </source>
</reference>
<reference evidence="13 14" key="7">
    <citation type="submission" date="2018-06" db="EMBL/GenBank/DDBJ databases">
        <authorList>
            <consortium name="Pathogen Informatics"/>
            <person name="Doyle S."/>
        </authorList>
    </citation>
    <scope>NUCLEOTIDE SEQUENCE [LARGE SCALE GENOMIC DNA]</scope>
    <source>
        <strain evidence="13 14">NCTC12360</strain>
    </source>
</reference>
<reference evidence="10 15" key="8">
    <citation type="submission" date="2019-04" db="EMBL/GenBank/DDBJ databases">
        <title>Step-wise assembly of the neonatal virome modulated by breast feeding.</title>
        <authorList>
            <person name="Liang G."/>
            <person name="Bushman F."/>
        </authorList>
    </citation>
    <scope>NUCLEOTIDE SEQUENCE [LARGE SCALE GENOMIC DNA]</scope>
    <source>
        <strain evidence="10 15">E3404</strain>
    </source>
</reference>
<reference evidence="12 16" key="9">
    <citation type="submission" date="2020-03" db="EMBL/GenBank/DDBJ databases">
        <title>Characterization of ganglioside-mimicking enterococci.</title>
        <authorList>
            <person name="Patry R.T."/>
            <person name="Nothaft H."/>
            <person name="Bridger R."/>
            <person name="Shajahan A."/>
            <person name="Huynh S."/>
            <person name="Sanchez S."/>
            <person name="Azadi P."/>
            <person name="Cooper K."/>
            <person name="Miller W.G."/>
            <person name="Parker C.T."/>
            <person name="Wells L."/>
            <person name="Szymanski C.M."/>
        </authorList>
    </citation>
    <scope>NUCLEOTIDE SEQUENCE [LARGE SCALE GENOMIC DNA]</scope>
    <source>
        <strain evidence="12 16">EGM181</strain>
    </source>
</reference>
<reference evidence="11" key="10">
    <citation type="submission" date="2020-07" db="EMBL/GenBank/DDBJ databases">
        <title>MOT database genomes.</title>
        <authorList>
            <person name="Joseph S."/>
            <person name="Aduse-Opoku J."/>
            <person name="Hashim A."/>
            <person name="Wade W."/>
            <person name="Curtis M."/>
        </authorList>
    </citation>
    <scope>NUCLEOTIDE SEQUENCE [LARGE SCALE GENOMIC DNA]</scope>
    <source>
        <strain>ENT</strain>
    </source>
</reference>
<reference evidence="9" key="11">
    <citation type="submission" date="2023-03" db="EMBL/GenBank/DDBJ databases">
        <authorList>
            <person name="Shen W."/>
            <person name="Cai J."/>
        </authorList>
    </citation>
    <scope>NUCLEOTIDE SEQUENCE [LARGE SCALE GENOMIC DNA]</scope>
    <source>
        <strain>K69-2</strain>
    </source>
</reference>
<reference evidence="6" key="12">
    <citation type="journal article" date="2005" name="Antimicrob. Agents Chemother.">
        <title>Transcriptional analysis of the vanC cluster from Enterococcus gallinarum strains with constitutive and inducible vancomycin resistance.</title>
        <authorList>
            <person name="Panesso D."/>
            <person name="Abadia-Patino L."/>
            <person name="Vanegas N."/>
            <person name="Reynolds P.E."/>
            <person name="Courvalin P."/>
            <person name="Arias C.A."/>
        </authorList>
    </citation>
    <scope>FUNCTION</scope>
    <scope>INDUCTION</scope>
</reference>
<reference evidence="17 18" key="13">
    <citation type="journal article" date="2014" name="Proc. Natl. Acad. Sci. U.S.A.">
        <title>Structural basis for the evolution of vancomycin resistance D,D-peptidases.</title>
        <authorList>
            <person name="Meziane-Cherif D."/>
            <person name="Stogios P.J."/>
            <person name="Evdokimova E."/>
            <person name="Savchenko A."/>
            <person name="Courvalin P."/>
        </authorList>
    </citation>
    <scope>X-RAY CRYSTALLOGRAPHY (1.65 ANGSTROMS) OF MUTANT SER-59 IN APO AND TRANSITION STATE ANALOG-BOUND FORMS IN COMPLEXES WITH COPPER AND ZINC AND IN COMPLEXES WITH D-ALA-D-ALA SUBSTRATE AND D-ALA PRODUCT IN COMPLEXES WITH COPPER AND ZINC</scope>
    <scope>FUNCTION</scope>
    <scope>CATALYTIC ACTIVITY</scope>
    <scope>BIOPHYSICOCHEMICAL PROPERTIES</scope>
    <scope>SUBUNIT</scope>
    <scope>DISULFIDE BONDS</scope>
    <scope>MUTAGENESIS OF ASP-59 AND GLU-153</scope>
</reference>
<gene>
    <name evidence="5 7" type="primary">vanXYC</name>
    <name evidence="12" type="ORF">EGM181_06555</name>
    <name evidence="10" type="ORF">GTI89_02115</name>
    <name evidence="11" type="ORF">HZY99_04425</name>
    <name evidence="13" type="ORF">NCTC12360_01404</name>
    <name evidence="9" type="ORF">P7E30_05555</name>
</gene>
<feature type="chain" id="PRO_0000462033" description="Bifunctional D-Ala-D-Ala dipeptidase and D-Ala-D-Ala carboxypeptidase VanXYC">
    <location>
        <begin position="1"/>
        <end position="190"/>
    </location>
</feature>
<feature type="active site" description="catalytic acid/base residue" evidence="4">
    <location>
        <position position="153"/>
    </location>
</feature>
<feature type="binding site" evidence="19">
    <location>
        <position position="66"/>
    </location>
    <ligand>
        <name>Mg(2+)</name>
        <dbReference type="ChEBI" id="CHEBI:18420"/>
    </ligand>
</feature>
<feature type="binding site" evidence="4 19">
    <location>
        <position position="67"/>
    </location>
    <ligand>
        <name>a dipeptide</name>
        <dbReference type="ChEBI" id="CHEBI:90799"/>
    </ligand>
</feature>
<feature type="binding site" evidence="4 19">
    <location>
        <position position="88"/>
    </location>
    <ligand>
        <name>a dipeptide</name>
        <dbReference type="ChEBI" id="CHEBI:90799"/>
    </ligand>
</feature>
<feature type="binding site" evidence="4 19">
    <location>
        <position position="93"/>
    </location>
    <ligand>
        <name>a dipeptide</name>
        <dbReference type="ChEBI" id="CHEBI:90799"/>
    </ligand>
</feature>
<feature type="binding site" evidence="4 19">
    <location>
        <position position="95"/>
    </location>
    <ligand>
        <name>a dipeptide</name>
        <dbReference type="ChEBI" id="CHEBI:90799"/>
    </ligand>
</feature>
<feature type="binding site" evidence="19">
    <location>
        <position position="95"/>
    </location>
    <ligand>
        <name>Cu(2+)</name>
        <dbReference type="ChEBI" id="CHEBI:29036"/>
    </ligand>
</feature>
<feature type="binding site" evidence="17 18">
    <location>
        <position position="95"/>
    </location>
    <ligand>
        <name>Zn(2+)</name>
        <dbReference type="ChEBI" id="CHEBI:29105"/>
    </ligand>
</feature>
<feature type="binding site" evidence="4 19">
    <location>
        <position position="102"/>
    </location>
    <ligand>
        <name>a dipeptide</name>
        <dbReference type="ChEBI" id="CHEBI:90799"/>
    </ligand>
</feature>
<feature type="binding site" evidence="19">
    <location>
        <position position="102"/>
    </location>
    <ligand>
        <name>Cu(2+)</name>
        <dbReference type="ChEBI" id="CHEBI:29036"/>
    </ligand>
</feature>
<feature type="binding site" evidence="17 18">
    <location>
        <position position="102"/>
    </location>
    <ligand>
        <name>Zn(2+)</name>
        <dbReference type="ChEBI" id="CHEBI:29105"/>
    </ligand>
</feature>
<feature type="binding site" evidence="4 19">
    <location>
        <position position="155"/>
    </location>
    <ligand>
        <name>a dipeptide</name>
        <dbReference type="ChEBI" id="CHEBI:90799"/>
    </ligand>
</feature>
<feature type="binding site" evidence="4 19">
    <location>
        <position position="156"/>
    </location>
    <ligand>
        <name>a dipeptide</name>
        <dbReference type="ChEBI" id="CHEBI:90799"/>
    </ligand>
</feature>
<feature type="binding site" evidence="19">
    <location>
        <position position="156"/>
    </location>
    <ligand>
        <name>Cu(2+)</name>
        <dbReference type="ChEBI" id="CHEBI:29036"/>
    </ligand>
</feature>
<feature type="binding site" evidence="17 18">
    <location>
        <position position="156"/>
    </location>
    <ligand>
        <name>Zn(2+)</name>
        <dbReference type="ChEBI" id="CHEBI:29105"/>
    </ligand>
</feature>
<feature type="disulfide bond" description="Interchain (with C-115)" evidence="4 19">
    <location>
        <position position="92"/>
    </location>
</feature>
<feature type="disulfide bond" description="Interchain (with C-92)" evidence="4 19">
    <location>
        <position position="115"/>
    </location>
</feature>
<feature type="mutagenesis site" description="Reduces catalytic efficiency about 5-fold with respect to D-Ala-D-Ala as substrate. Almost no reduction in catalytic efficiency with respect to UDP-MurNAc-L-Ala-D-Glu-L-Lys-D-Ala-D-Ala as substrate." evidence="4">
    <original>D</original>
    <variation>S</variation>
    <location>
        <position position="59"/>
    </location>
</feature>
<feature type="mutagenesis site" description="Abolishes hydrolysis of D-Ala-D-Ala and UDP-MurNAc-L-Ala-D-Glu-L-Lys-D-Ala-D-Ala." evidence="4">
    <original>E</original>
    <variation>A</variation>
    <location>
        <position position="153"/>
    </location>
</feature>
<name>VANXY_ENTGA</name>
<protein>
    <recommendedName>
        <fullName evidence="5">Bifunctional D-Ala-D-Ala dipeptidase and D-Ala-D-Ala carboxypeptidase VanXYC</fullName>
        <ecNumber evidence="1 2 4">3.4.13.22</ecNumber>
        <ecNumber evidence="1 2 4">3.4.17.-</ecNumber>
    </recommendedName>
    <alternativeName>
        <fullName evidence="5 7 8">D,D-dipeptidase/D,D-carboxypeptidase</fullName>
    </alternativeName>
    <alternativeName>
        <fullName evidence="9">D-Ala-D-Ala dipeptidase/D-Ala-D-Ala carboxypeptidase VanXY-C</fullName>
    </alternativeName>
    <alternativeName>
        <fullName evidence="6">Vancomycin C-type resistance protein VanXYC</fullName>
    </alternativeName>
</protein>
<dbReference type="EC" id="3.4.13.22" evidence="1 2 4"/>
<dbReference type="EC" id="3.4.17.-" evidence="1 2 4"/>
<dbReference type="EMBL" id="AF162694">
    <property type="protein sequence ID" value="AAF61331.1"/>
    <property type="molecule type" value="Genomic_DNA"/>
</dbReference>
<dbReference type="EMBL" id="DQ022190">
    <property type="protein sequence ID" value="AAY67969.1"/>
    <property type="molecule type" value="Genomic_DNA"/>
</dbReference>
<dbReference type="EMBL" id="JARPZN010000002">
    <property type="protein sequence ID" value="MDT2689680.1"/>
    <property type="molecule type" value="Genomic_DNA"/>
</dbReference>
<dbReference type="EMBL" id="WVTI01000001">
    <property type="protein sequence ID" value="MXS24888.1"/>
    <property type="molecule type" value="Genomic_DNA"/>
</dbReference>
<dbReference type="EMBL" id="JACBYD010000038">
    <property type="protein sequence ID" value="NYS81410.1"/>
    <property type="molecule type" value="Genomic_DNA"/>
</dbReference>
<dbReference type="EMBL" id="CP050485">
    <property type="protein sequence ID" value="QOG26925.1"/>
    <property type="molecule type" value="Genomic_DNA"/>
</dbReference>
<dbReference type="EMBL" id="UFYW01000001">
    <property type="protein sequence ID" value="STD82963.1"/>
    <property type="molecule type" value="Genomic_DNA"/>
</dbReference>
<dbReference type="PDB" id="4MUR">
    <property type="method" value="X-ray"/>
    <property type="resolution" value="1.65 A"/>
    <property type="chains" value="A/B=1-190"/>
</dbReference>
<dbReference type="PDB" id="4MUS">
    <property type="method" value="X-ray"/>
    <property type="resolution" value="1.68 A"/>
    <property type="chains" value="A/B=1-190"/>
</dbReference>
<dbReference type="PDB" id="4MUT">
    <property type="method" value="X-ray"/>
    <property type="resolution" value="2.25 A"/>
    <property type="chains" value="A/B=1-190"/>
</dbReference>
<dbReference type="PDB" id="4OAK">
    <property type="method" value="X-ray"/>
    <property type="resolution" value="2.00 A"/>
    <property type="chains" value="A/B=1-190"/>
</dbReference>
<dbReference type="PDBsum" id="4MUR"/>
<dbReference type="PDBsum" id="4MUS"/>
<dbReference type="PDBsum" id="4MUT"/>
<dbReference type="PDBsum" id="4OAK"/>
<dbReference type="SMR" id="Q9JN36"/>
<dbReference type="MEROPS" id="M15.003"/>
<dbReference type="PATRIC" id="fig|1353.6.peg.68"/>
<dbReference type="OrthoDB" id="9792074at2"/>
<dbReference type="BioCyc" id="MetaCyc:MONOMER-15477"/>
<dbReference type="Proteomes" id="UP000254807">
    <property type="component" value="Unassembled WGS sequence"/>
</dbReference>
<dbReference type="Proteomes" id="UP000439965">
    <property type="component" value="Unassembled WGS sequence"/>
</dbReference>
<dbReference type="Proteomes" id="UP000516696">
    <property type="component" value="Chromosome"/>
</dbReference>
<dbReference type="Proteomes" id="UP001183682">
    <property type="component" value="Unassembled WGS sequence"/>
</dbReference>
<dbReference type="GO" id="GO:0005737">
    <property type="term" value="C:cytoplasm"/>
    <property type="evidence" value="ECO:0007669"/>
    <property type="project" value="UniProtKB-SubCell"/>
</dbReference>
<dbReference type="GO" id="GO:0004180">
    <property type="term" value="F:carboxypeptidase activity"/>
    <property type="evidence" value="ECO:0007669"/>
    <property type="project" value="UniProtKB-KW"/>
</dbReference>
<dbReference type="GO" id="GO:0046872">
    <property type="term" value="F:metal ion binding"/>
    <property type="evidence" value="ECO:0007669"/>
    <property type="project" value="UniProtKB-KW"/>
</dbReference>
<dbReference type="GO" id="GO:0006508">
    <property type="term" value="P:proteolysis"/>
    <property type="evidence" value="ECO:0007669"/>
    <property type="project" value="InterPro"/>
</dbReference>
<dbReference type="CDD" id="cd14849">
    <property type="entry name" value="DD-dipeptidase_VanXYc"/>
    <property type="match status" value="1"/>
</dbReference>
<dbReference type="Gene3D" id="3.30.1380.10">
    <property type="match status" value="1"/>
</dbReference>
<dbReference type="InterPro" id="IPR052179">
    <property type="entry name" value="Bact_PeptidoProc_Enz"/>
</dbReference>
<dbReference type="InterPro" id="IPR009045">
    <property type="entry name" value="Hedgehog_sig/DD-Pept_Zn-bd_sf"/>
</dbReference>
<dbReference type="InterPro" id="IPR003709">
    <property type="entry name" value="Pept_M15B"/>
</dbReference>
<dbReference type="NCBIfam" id="NF000380">
    <property type="entry name" value="vanXY"/>
    <property type="match status" value="1"/>
</dbReference>
<dbReference type="PANTHER" id="PTHR34385">
    <property type="entry name" value="D-ALANYL-D-ALANINE CARBOXYPEPTIDASE"/>
    <property type="match status" value="1"/>
</dbReference>
<dbReference type="PANTHER" id="PTHR34385:SF1">
    <property type="entry name" value="PEPTIDOGLYCAN L-ALANYL-D-GLUTAMATE ENDOPEPTIDASE CWLK"/>
    <property type="match status" value="1"/>
</dbReference>
<dbReference type="Pfam" id="PF02557">
    <property type="entry name" value="VanY"/>
    <property type="match status" value="1"/>
</dbReference>
<dbReference type="SUPFAM" id="SSF55166">
    <property type="entry name" value="Hedgehog/DD-peptidase"/>
    <property type="match status" value="1"/>
</dbReference>
<evidence type="ECO:0000269" key="1">
    <source>
    </source>
</evidence>
<evidence type="ECO:0000269" key="2">
    <source>
    </source>
</evidence>
<evidence type="ECO:0000269" key="3">
    <source>
    </source>
</evidence>
<evidence type="ECO:0000269" key="4">
    <source>
    </source>
</evidence>
<evidence type="ECO:0000303" key="5">
    <source>
    </source>
</evidence>
<evidence type="ECO:0000305" key="6"/>
<evidence type="ECO:0000312" key="7">
    <source>
        <dbReference type="EMBL" id="AAF61331.1"/>
    </source>
</evidence>
<evidence type="ECO:0000312" key="8">
    <source>
        <dbReference type="EMBL" id="AAY67969.1"/>
    </source>
</evidence>
<evidence type="ECO:0000312" key="9">
    <source>
        <dbReference type="EMBL" id="MDT2689680.1"/>
    </source>
</evidence>
<evidence type="ECO:0000312" key="10">
    <source>
        <dbReference type="EMBL" id="MXS24888.1"/>
    </source>
</evidence>
<evidence type="ECO:0000312" key="11">
    <source>
        <dbReference type="EMBL" id="NYS81410.1"/>
    </source>
</evidence>
<evidence type="ECO:0000312" key="12">
    <source>
        <dbReference type="EMBL" id="QOG26925.1"/>
    </source>
</evidence>
<evidence type="ECO:0000312" key="13">
    <source>
        <dbReference type="EMBL" id="STD82963.1"/>
    </source>
</evidence>
<evidence type="ECO:0000312" key="14">
    <source>
        <dbReference type="Proteomes" id="UP000254807"/>
    </source>
</evidence>
<evidence type="ECO:0000312" key="15">
    <source>
        <dbReference type="Proteomes" id="UP000439965"/>
    </source>
</evidence>
<evidence type="ECO:0000312" key="16">
    <source>
        <dbReference type="Proteomes" id="UP000516696"/>
    </source>
</evidence>
<evidence type="ECO:0007744" key="17">
    <source>
        <dbReference type="PDB" id="4MUR"/>
    </source>
</evidence>
<evidence type="ECO:0007744" key="18">
    <source>
        <dbReference type="PDB" id="4MUS"/>
    </source>
</evidence>
<evidence type="ECO:0007744" key="19">
    <source>
        <dbReference type="PDB" id="4OAK"/>
    </source>
</evidence>
<organism evidence="7">
    <name type="scientific">Enterococcus gallinarum</name>
    <dbReference type="NCBI Taxonomy" id="1353"/>
    <lineage>
        <taxon>Bacteria</taxon>
        <taxon>Bacillati</taxon>
        <taxon>Bacillota</taxon>
        <taxon>Bacilli</taxon>
        <taxon>Lactobacillales</taxon>
        <taxon>Enterococcaceae</taxon>
        <taxon>Enterococcus</taxon>
    </lineage>
</organism>
<accession>Q9JN36</accession>
<proteinExistence type="evidence at protein level"/>